<dbReference type="EMBL" id="AK000540">
    <property type="protein sequence ID" value="BAA91240.1"/>
    <property type="molecule type" value="mRNA"/>
</dbReference>
<dbReference type="EMBL" id="AC022868">
    <property type="status" value="NOT_ANNOTATED_CDS"/>
    <property type="molecule type" value="Genomic_DNA"/>
</dbReference>
<dbReference type="EMBL" id="BC002748">
    <property type="protein sequence ID" value="AAH02748.2"/>
    <property type="molecule type" value="mRNA"/>
</dbReference>
<dbReference type="CCDS" id="CCDS47876.1">
    <molecule id="Q9BUB7-3"/>
</dbReference>
<dbReference type="CCDS" id="CCDS6215.1">
    <molecule id="Q9BUB7-1"/>
</dbReference>
<dbReference type="RefSeq" id="NP_001035703.1">
    <molecule id="Q9BUB7-3"/>
    <property type="nucleotide sequence ID" value="NM_001040613.3"/>
</dbReference>
<dbReference type="RefSeq" id="NP_060336.3">
    <molecule id="Q9BUB7-1"/>
    <property type="nucleotide sequence ID" value="NM_017866.5"/>
</dbReference>
<dbReference type="BioGRID" id="120305">
    <property type="interactions" value="261"/>
</dbReference>
<dbReference type="FunCoup" id="Q9BUB7">
    <property type="interactions" value="1810"/>
</dbReference>
<dbReference type="IntAct" id="Q9BUB7">
    <property type="interactions" value="59"/>
</dbReference>
<dbReference type="MINT" id="Q9BUB7"/>
<dbReference type="STRING" id="9606.ENSP00000312599"/>
<dbReference type="TCDB" id="8.A.96.1.1">
    <property type="family name" value="the tmem70 (tmem70) family"/>
</dbReference>
<dbReference type="iPTMnet" id="Q9BUB7"/>
<dbReference type="PhosphoSitePlus" id="Q9BUB7"/>
<dbReference type="SwissPalm" id="Q9BUB7"/>
<dbReference type="BioMuta" id="TMEM70"/>
<dbReference type="DMDM" id="74733203"/>
<dbReference type="jPOST" id="Q9BUB7"/>
<dbReference type="MassIVE" id="Q9BUB7"/>
<dbReference type="PaxDb" id="9606-ENSP00000312599"/>
<dbReference type="PeptideAtlas" id="Q9BUB7"/>
<dbReference type="ProteomicsDB" id="19777"/>
<dbReference type="ProteomicsDB" id="79075">
    <molecule id="Q9BUB7-1"/>
</dbReference>
<dbReference type="ProteomicsDB" id="79076">
    <molecule id="Q9BUB7-2"/>
</dbReference>
<dbReference type="Pumba" id="Q9BUB7"/>
<dbReference type="TopDownProteomics" id="Q9BUB7-1">
    <molecule id="Q9BUB7-1"/>
</dbReference>
<dbReference type="TopDownProteomics" id="Q9BUB7-2">
    <molecule id="Q9BUB7-2"/>
</dbReference>
<dbReference type="Antibodypedia" id="42550">
    <property type="antibodies" value="135 antibodies from 29 providers"/>
</dbReference>
<dbReference type="DNASU" id="54968"/>
<dbReference type="Ensembl" id="ENST00000312184.6">
    <molecule id="Q9BUB7-1"/>
    <property type="protein sequence ID" value="ENSP00000312599.5"/>
    <property type="gene ID" value="ENSG00000175606.11"/>
</dbReference>
<dbReference type="Ensembl" id="ENST00000517439.1">
    <molecule id="Q9BUB7-3"/>
    <property type="protein sequence ID" value="ENSP00000429467.1"/>
    <property type="gene ID" value="ENSG00000175606.11"/>
</dbReference>
<dbReference type="GeneID" id="54968"/>
<dbReference type="KEGG" id="hsa:54968"/>
<dbReference type="MANE-Select" id="ENST00000312184.6">
    <property type="protein sequence ID" value="ENSP00000312599.5"/>
    <property type="RefSeq nucleotide sequence ID" value="NM_017866.6"/>
    <property type="RefSeq protein sequence ID" value="NP_060336.3"/>
</dbReference>
<dbReference type="UCSC" id="uc003yab.4">
    <molecule id="Q9BUB7-1"/>
    <property type="organism name" value="human"/>
</dbReference>
<dbReference type="AGR" id="HGNC:26050"/>
<dbReference type="CTD" id="54968"/>
<dbReference type="DisGeNET" id="54968"/>
<dbReference type="GeneCards" id="TMEM70"/>
<dbReference type="HGNC" id="HGNC:26050">
    <property type="gene designation" value="TMEM70"/>
</dbReference>
<dbReference type="HPA" id="ENSG00000175606">
    <property type="expression patterns" value="Tissue enriched (skeletal)"/>
</dbReference>
<dbReference type="MalaCards" id="TMEM70"/>
<dbReference type="MIM" id="612418">
    <property type="type" value="gene"/>
</dbReference>
<dbReference type="MIM" id="614052">
    <property type="type" value="phenotype"/>
</dbReference>
<dbReference type="neXtProt" id="NX_Q9BUB7"/>
<dbReference type="OpenTargets" id="ENSG00000175606"/>
<dbReference type="Orphanet" id="1194">
    <property type="disease" value="TMEM70-related mitochondrial encephalo-cardio-myopathy"/>
</dbReference>
<dbReference type="PharmGKB" id="PA142670783"/>
<dbReference type="VEuPathDB" id="HostDB:ENSG00000175606"/>
<dbReference type="eggNOG" id="KOG4478">
    <property type="taxonomic scope" value="Eukaryota"/>
</dbReference>
<dbReference type="GeneTree" id="ENSGT00390000018710"/>
<dbReference type="HOGENOM" id="CLU_096509_1_0_1"/>
<dbReference type="InParanoid" id="Q9BUB7"/>
<dbReference type="OMA" id="YKDTHTH"/>
<dbReference type="OrthoDB" id="156886at2759"/>
<dbReference type="PAN-GO" id="Q9BUB7">
    <property type="GO annotations" value="2 GO annotations based on evolutionary models"/>
</dbReference>
<dbReference type="PhylomeDB" id="Q9BUB7"/>
<dbReference type="TreeFam" id="TF314656"/>
<dbReference type="PathwayCommons" id="Q9BUB7"/>
<dbReference type="SignaLink" id="Q9BUB7"/>
<dbReference type="BioGRID-ORCS" id="54968">
    <property type="hits" value="18 hits in 1162 CRISPR screens"/>
</dbReference>
<dbReference type="GenomeRNAi" id="54968"/>
<dbReference type="Pharos" id="Q9BUB7">
    <property type="development level" value="Tbio"/>
</dbReference>
<dbReference type="PRO" id="PR:Q9BUB7"/>
<dbReference type="Proteomes" id="UP000005640">
    <property type="component" value="Chromosome 8"/>
</dbReference>
<dbReference type="RNAct" id="Q9BUB7">
    <property type="molecule type" value="protein"/>
</dbReference>
<dbReference type="Bgee" id="ENSG00000175606">
    <property type="expression patterns" value="Expressed in vastus lateralis and 204 other cell types or tissues"/>
</dbReference>
<dbReference type="ExpressionAtlas" id="Q9BUB7">
    <property type="expression patterns" value="baseline and differential"/>
</dbReference>
<dbReference type="GO" id="GO:0030061">
    <property type="term" value="C:mitochondrial crista"/>
    <property type="evidence" value="ECO:0000314"/>
    <property type="project" value="UniProtKB"/>
</dbReference>
<dbReference type="GO" id="GO:0005743">
    <property type="term" value="C:mitochondrial inner membrane"/>
    <property type="evidence" value="ECO:0000314"/>
    <property type="project" value="UniProtKB"/>
</dbReference>
<dbReference type="GO" id="GO:0031966">
    <property type="term" value="C:mitochondrial membrane"/>
    <property type="evidence" value="ECO:0000314"/>
    <property type="project" value="UniProtKB"/>
</dbReference>
<dbReference type="GO" id="GO:0005739">
    <property type="term" value="C:mitochondrion"/>
    <property type="evidence" value="ECO:0000314"/>
    <property type="project" value="HPA"/>
</dbReference>
<dbReference type="GO" id="GO:0005654">
    <property type="term" value="C:nucleoplasm"/>
    <property type="evidence" value="ECO:0000314"/>
    <property type="project" value="HPA"/>
</dbReference>
<dbReference type="GO" id="GO:0140260">
    <property type="term" value="F:mitochondrial proton-transporting ATP synthase complex binding"/>
    <property type="evidence" value="ECO:0000314"/>
    <property type="project" value="UniProtKB"/>
</dbReference>
<dbReference type="GO" id="GO:0033615">
    <property type="term" value="P:mitochondrial proton-transporting ATP synthase complex assembly"/>
    <property type="evidence" value="ECO:0000315"/>
    <property type="project" value="UniProtKB"/>
</dbReference>
<dbReference type="GO" id="GO:0032981">
    <property type="term" value="P:mitochondrial respiratory chain complex I assembly"/>
    <property type="evidence" value="ECO:0000315"/>
    <property type="project" value="FlyBase"/>
</dbReference>
<dbReference type="GO" id="GO:0051259">
    <property type="term" value="P:protein complex oligomerization"/>
    <property type="evidence" value="ECO:0000314"/>
    <property type="project" value="UniProtKB"/>
</dbReference>
<dbReference type="GO" id="GO:0051260">
    <property type="term" value="P:protein homooligomerization"/>
    <property type="evidence" value="ECO:0000314"/>
    <property type="project" value="UniProtKB"/>
</dbReference>
<dbReference type="InterPro" id="IPR009724">
    <property type="entry name" value="TMEM70"/>
</dbReference>
<dbReference type="InterPro" id="IPR045325">
    <property type="entry name" value="TMEM70/TMEM186/TMEM223"/>
</dbReference>
<dbReference type="PANTHER" id="PTHR13281">
    <property type="entry name" value="TRANSMEMBRANE PROTEIN 70, MITOCHONDRIAL"/>
    <property type="match status" value="1"/>
</dbReference>
<dbReference type="PANTHER" id="PTHR13281:SF0">
    <property type="entry name" value="TRANSMEMBRANE PROTEIN 70, MITOCHONDRIAL"/>
    <property type="match status" value="1"/>
</dbReference>
<dbReference type="Pfam" id="PF06979">
    <property type="entry name" value="TMEM70"/>
    <property type="match status" value="1"/>
</dbReference>
<keyword id="KW-0025">Alternative splicing</keyword>
<keyword id="KW-0472">Membrane</keyword>
<keyword id="KW-0496">Mitochondrion</keyword>
<keyword id="KW-0999">Mitochondrion inner membrane</keyword>
<keyword id="KW-1274">Primary mitochondrial disease</keyword>
<keyword id="KW-1267">Proteomics identification</keyword>
<keyword id="KW-1185">Reference proteome</keyword>
<keyword id="KW-0809">Transit peptide</keyword>
<keyword id="KW-0812">Transmembrane</keyword>
<keyword id="KW-1133">Transmembrane helix</keyword>
<reference key="1">
    <citation type="journal article" date="2004" name="Nat. Genet.">
        <title>Complete sequencing and characterization of 21,243 full-length human cDNAs.</title>
        <authorList>
            <person name="Ota T."/>
            <person name="Suzuki Y."/>
            <person name="Nishikawa T."/>
            <person name="Otsuki T."/>
            <person name="Sugiyama T."/>
            <person name="Irie R."/>
            <person name="Wakamatsu A."/>
            <person name="Hayashi K."/>
            <person name="Sato H."/>
            <person name="Nagai K."/>
            <person name="Kimura K."/>
            <person name="Makita H."/>
            <person name="Sekine M."/>
            <person name="Obayashi M."/>
            <person name="Nishi T."/>
            <person name="Shibahara T."/>
            <person name="Tanaka T."/>
            <person name="Ishii S."/>
            <person name="Yamamoto J."/>
            <person name="Saito K."/>
            <person name="Kawai Y."/>
            <person name="Isono Y."/>
            <person name="Nakamura Y."/>
            <person name="Nagahari K."/>
            <person name="Murakami K."/>
            <person name="Yasuda T."/>
            <person name="Iwayanagi T."/>
            <person name="Wagatsuma M."/>
            <person name="Shiratori A."/>
            <person name="Sudo H."/>
            <person name="Hosoiri T."/>
            <person name="Kaku Y."/>
            <person name="Kodaira H."/>
            <person name="Kondo H."/>
            <person name="Sugawara M."/>
            <person name="Takahashi M."/>
            <person name="Kanda K."/>
            <person name="Yokoi T."/>
            <person name="Furuya T."/>
            <person name="Kikkawa E."/>
            <person name="Omura Y."/>
            <person name="Abe K."/>
            <person name="Kamihara K."/>
            <person name="Katsuta N."/>
            <person name="Sato K."/>
            <person name="Tanikawa M."/>
            <person name="Yamazaki M."/>
            <person name="Ninomiya K."/>
            <person name="Ishibashi T."/>
            <person name="Yamashita H."/>
            <person name="Murakawa K."/>
            <person name="Fujimori K."/>
            <person name="Tanai H."/>
            <person name="Kimata M."/>
            <person name="Watanabe M."/>
            <person name="Hiraoka S."/>
            <person name="Chiba Y."/>
            <person name="Ishida S."/>
            <person name="Ono Y."/>
            <person name="Takiguchi S."/>
            <person name="Watanabe S."/>
            <person name="Yosida M."/>
            <person name="Hotuta T."/>
            <person name="Kusano J."/>
            <person name="Kanehori K."/>
            <person name="Takahashi-Fujii A."/>
            <person name="Hara H."/>
            <person name="Tanase T.-O."/>
            <person name="Nomura Y."/>
            <person name="Togiya S."/>
            <person name="Komai F."/>
            <person name="Hara R."/>
            <person name="Takeuchi K."/>
            <person name="Arita M."/>
            <person name="Imose N."/>
            <person name="Musashino K."/>
            <person name="Yuuki H."/>
            <person name="Oshima A."/>
            <person name="Sasaki N."/>
            <person name="Aotsuka S."/>
            <person name="Yoshikawa Y."/>
            <person name="Matsunawa H."/>
            <person name="Ichihara T."/>
            <person name="Shiohata N."/>
            <person name="Sano S."/>
            <person name="Moriya S."/>
            <person name="Momiyama H."/>
            <person name="Satoh N."/>
            <person name="Takami S."/>
            <person name="Terashima Y."/>
            <person name="Suzuki O."/>
            <person name="Nakagawa S."/>
            <person name="Senoh A."/>
            <person name="Mizoguchi H."/>
            <person name="Goto Y."/>
            <person name="Shimizu F."/>
            <person name="Wakebe H."/>
            <person name="Hishigaki H."/>
            <person name="Watanabe T."/>
            <person name="Sugiyama A."/>
            <person name="Takemoto M."/>
            <person name="Kawakami B."/>
            <person name="Yamazaki M."/>
            <person name="Watanabe K."/>
            <person name="Kumagai A."/>
            <person name="Itakura S."/>
            <person name="Fukuzumi Y."/>
            <person name="Fujimori Y."/>
            <person name="Komiyama M."/>
            <person name="Tashiro H."/>
            <person name="Tanigami A."/>
            <person name="Fujiwara T."/>
            <person name="Ono T."/>
            <person name="Yamada K."/>
            <person name="Fujii Y."/>
            <person name="Ozaki K."/>
            <person name="Hirao M."/>
            <person name="Ohmori Y."/>
            <person name="Kawabata A."/>
            <person name="Hikiji T."/>
            <person name="Kobatake N."/>
            <person name="Inagaki H."/>
            <person name="Ikema Y."/>
            <person name="Okamoto S."/>
            <person name="Okitani R."/>
            <person name="Kawakami T."/>
            <person name="Noguchi S."/>
            <person name="Itoh T."/>
            <person name="Shigeta K."/>
            <person name="Senba T."/>
            <person name="Matsumura K."/>
            <person name="Nakajima Y."/>
            <person name="Mizuno T."/>
            <person name="Morinaga M."/>
            <person name="Sasaki M."/>
            <person name="Togashi T."/>
            <person name="Oyama M."/>
            <person name="Hata H."/>
            <person name="Watanabe M."/>
            <person name="Komatsu T."/>
            <person name="Mizushima-Sugano J."/>
            <person name="Satoh T."/>
            <person name="Shirai Y."/>
            <person name="Takahashi Y."/>
            <person name="Nakagawa K."/>
            <person name="Okumura K."/>
            <person name="Nagase T."/>
            <person name="Nomura N."/>
            <person name="Kikuchi H."/>
            <person name="Masuho Y."/>
            <person name="Yamashita R."/>
            <person name="Nakai K."/>
            <person name="Yada T."/>
            <person name="Nakamura Y."/>
            <person name="Ohara O."/>
            <person name="Isogai T."/>
            <person name="Sugano S."/>
        </authorList>
    </citation>
    <scope>NUCLEOTIDE SEQUENCE [LARGE SCALE MRNA] (ISOFORM 2)</scope>
    <scope>VARIANTS ALA-250 AND GLU-259</scope>
</reference>
<reference key="2">
    <citation type="journal article" date="2006" name="Nature">
        <title>DNA sequence and analysis of human chromosome 8.</title>
        <authorList>
            <person name="Nusbaum C."/>
            <person name="Mikkelsen T.S."/>
            <person name="Zody M.C."/>
            <person name="Asakawa S."/>
            <person name="Taudien S."/>
            <person name="Garber M."/>
            <person name="Kodira C.D."/>
            <person name="Schueler M.G."/>
            <person name="Shimizu A."/>
            <person name="Whittaker C.A."/>
            <person name="Chang J.L."/>
            <person name="Cuomo C.A."/>
            <person name="Dewar K."/>
            <person name="FitzGerald M.G."/>
            <person name="Yang X."/>
            <person name="Allen N.R."/>
            <person name="Anderson S."/>
            <person name="Asakawa T."/>
            <person name="Blechschmidt K."/>
            <person name="Bloom T."/>
            <person name="Borowsky M.L."/>
            <person name="Butler J."/>
            <person name="Cook A."/>
            <person name="Corum B."/>
            <person name="DeArellano K."/>
            <person name="DeCaprio D."/>
            <person name="Dooley K.T."/>
            <person name="Dorris L. III"/>
            <person name="Engels R."/>
            <person name="Gloeckner G."/>
            <person name="Hafez N."/>
            <person name="Hagopian D.S."/>
            <person name="Hall J.L."/>
            <person name="Ishikawa S.K."/>
            <person name="Jaffe D.B."/>
            <person name="Kamat A."/>
            <person name="Kudoh J."/>
            <person name="Lehmann R."/>
            <person name="Lokitsang T."/>
            <person name="Macdonald P."/>
            <person name="Major J.E."/>
            <person name="Matthews C.D."/>
            <person name="Mauceli E."/>
            <person name="Menzel U."/>
            <person name="Mihalev A.H."/>
            <person name="Minoshima S."/>
            <person name="Murayama Y."/>
            <person name="Naylor J.W."/>
            <person name="Nicol R."/>
            <person name="Nguyen C."/>
            <person name="O'Leary S.B."/>
            <person name="O'Neill K."/>
            <person name="Parker S.C.J."/>
            <person name="Polley A."/>
            <person name="Raymond C.K."/>
            <person name="Reichwald K."/>
            <person name="Rodriguez J."/>
            <person name="Sasaki T."/>
            <person name="Schilhabel M."/>
            <person name="Siddiqui R."/>
            <person name="Smith C.L."/>
            <person name="Sneddon T.P."/>
            <person name="Talamas J.A."/>
            <person name="Tenzin P."/>
            <person name="Topham K."/>
            <person name="Venkataraman V."/>
            <person name="Wen G."/>
            <person name="Yamazaki S."/>
            <person name="Young S.K."/>
            <person name="Zeng Q."/>
            <person name="Zimmer A.R."/>
            <person name="Rosenthal A."/>
            <person name="Birren B.W."/>
            <person name="Platzer M."/>
            <person name="Shimizu N."/>
            <person name="Lander E.S."/>
        </authorList>
    </citation>
    <scope>NUCLEOTIDE SEQUENCE [LARGE SCALE GENOMIC DNA]</scope>
</reference>
<reference key="3">
    <citation type="journal article" date="2004" name="Genome Res.">
        <title>The status, quality, and expansion of the NIH full-length cDNA project: the Mammalian Gene Collection (MGC).</title>
        <authorList>
            <consortium name="The MGC Project Team"/>
        </authorList>
    </citation>
    <scope>NUCLEOTIDE SEQUENCE [LARGE SCALE MRNA] (ISOFORM 1)</scope>
    <source>
        <tissue>Uterus</tissue>
    </source>
</reference>
<reference key="4">
    <citation type="journal article" date="2008" name="Nat. Genet.">
        <title>TMEM70 mutations cause isolated ATP synthase deficiency and neonatal mitochondrial encephalocardiomyopathy.</title>
        <authorList>
            <person name="Cizkova A."/>
            <person name="Stranecky V."/>
            <person name="Mayr J.A."/>
            <person name="Tesarova M."/>
            <person name="Havlickova V."/>
            <person name="Paul J."/>
            <person name="Ivanek R."/>
            <person name="Kuss A.W."/>
            <person name="Hansikova H."/>
            <person name="Kaplanova V."/>
            <person name="Vrbacky M."/>
            <person name="Hartmannova H."/>
            <person name="Noskova L."/>
            <person name="Honzik T."/>
            <person name="Drahota Z."/>
            <person name="Magner M."/>
            <person name="Hejzlarova K."/>
            <person name="Sperl W."/>
            <person name="Zeman J."/>
            <person name="Houstek J."/>
            <person name="Kmoch S."/>
        </authorList>
    </citation>
    <scope>FUNCTION</scope>
    <scope>INVOLVEMENT IN MC5DN2</scope>
</reference>
<reference key="5">
    <citation type="journal article" date="2011" name="BMC Syst. Biol.">
        <title>Initial characterization of the human central proteome.</title>
        <authorList>
            <person name="Burkard T.R."/>
            <person name="Planyavsky M."/>
            <person name="Kaupe I."/>
            <person name="Breitwieser F.P."/>
            <person name="Buerckstuemmer T."/>
            <person name="Bennett K.L."/>
            <person name="Superti-Furga G."/>
            <person name="Colinge J."/>
        </authorList>
    </citation>
    <scope>IDENTIFICATION BY MASS SPECTROMETRY [LARGE SCALE ANALYSIS]</scope>
</reference>
<reference key="6">
    <citation type="journal article" date="2011" name="Biochim. Biophys. Acta">
        <title>Expression and processing of the TMEM70 protein.</title>
        <authorList>
            <person name="Hejzlarova K."/>
            <person name="Tesarova M."/>
            <person name="Vrbacka-Cizkova A."/>
            <person name="Vrbacky M."/>
            <person name="Hartmannova H."/>
            <person name="Kaplanova V."/>
            <person name="Noskova L."/>
            <person name="Kratochvilova H."/>
            <person name="Buzkova J."/>
            <person name="Havlickova V."/>
            <person name="Zeman J."/>
            <person name="Kmoch S."/>
            <person name="Houstek J."/>
        </authorList>
    </citation>
    <scope>FUNCTION</scope>
    <scope>SUBCELLULAR LOCATION</scope>
</reference>
<reference key="7">
    <citation type="journal article" date="2014" name="Mitochondrion">
        <title>Mitochondrial membrane assembly of TMEM70 protein.</title>
        <authorList>
            <person name="Kratochvilova H."/>
            <person name="Hejzlarova K."/>
            <person name="Vrbacky M."/>
            <person name="Mracek T."/>
            <person name="Karbanova V."/>
            <person name="Tesarova M."/>
            <person name="Gombitova A."/>
            <person name="Cmarko D."/>
            <person name="Wittig I."/>
            <person name="Zeman J."/>
            <person name="Houstek J."/>
        </authorList>
    </citation>
    <scope>TOPOLOGY</scope>
    <scope>SUBCELLULAR LOCATION</scope>
    <scope>SUBUNIT</scope>
</reference>
<reference key="8">
    <citation type="journal article" date="2015" name="Proteomics">
        <title>N-terminome analysis of the human mitochondrial proteome.</title>
        <authorList>
            <person name="Vaca Jacome A.S."/>
            <person name="Rabilloud T."/>
            <person name="Schaeffer-Reiss C."/>
            <person name="Rompais M."/>
            <person name="Ayoub D."/>
            <person name="Lane L."/>
            <person name="Bairoch A."/>
            <person name="Van Dorsselaer A."/>
            <person name="Carapito C."/>
        </authorList>
    </citation>
    <scope>IDENTIFICATION BY MASS SPECTROMETRY [LARGE SCALE ANALYSIS]</scope>
</reference>
<reference key="9">
    <citation type="journal article" date="2019" name="FASEB J.">
        <title>TMEM70 facilitates biogenesis of mammalian ATP synthase by promoting subunit c incorporation into the rotor structure of the enzyme.</title>
        <authorList>
            <person name="Kovalcikova J."/>
            <person name="Vrbacky M."/>
            <person name="Pecina P."/>
            <person name="Tauchmannova K."/>
            <person name="Nuskova H."/>
            <person name="Kaplanova V."/>
            <person name="Brazdova A."/>
            <person name="Alan L."/>
            <person name="Elias J."/>
            <person name="Cunatova K."/>
            <person name="Korinek V."/>
            <person name="Sedlacek R."/>
            <person name="Mracek T."/>
            <person name="Houstek J."/>
        </authorList>
    </citation>
    <scope>TISSUE SPECIFICITY</scope>
    <scope>INTERACTION WITH ATP5MC1</scope>
    <scope>FUNCTION</scope>
</reference>
<reference key="10">
    <citation type="journal article" date="2020" name="Biochim. Biophys. Acta">
        <title>TMEM70 functions in the assembly of complexes I and V.</title>
        <authorList>
            <person name="Sanchez-Caballero L."/>
            <person name="Elurbe D.M."/>
            <person name="Baertling F."/>
            <person name="Guerrero-Castillo S."/>
            <person name="van den Brand M."/>
            <person name="van Strien J."/>
            <person name="van Dam T.J.P."/>
            <person name="Rodenburg R."/>
            <person name="Brandt U."/>
            <person name="Huynen M.A."/>
            <person name="Nijtmans L.G.J."/>
        </authorList>
    </citation>
    <scope>FUNCTION</scope>
</reference>
<reference key="11">
    <citation type="journal article" date="2021" name="Biochim. Biophys. Acta">
        <title>TMEM70 forms oligomeric scaffolds within mitochondrial cristae promoting in situ assembly of mammalian ATP synthase proton channel.</title>
        <authorList>
            <person name="Bahri H."/>
            <person name="Buratto J."/>
            <person name="Rojo M."/>
            <person name="Dompierre J.P."/>
            <person name="Salin B."/>
            <person name="Blancard C."/>
            <person name="Cuvellier S."/>
            <person name="Rose M."/>
            <person name="Ben Ammar Elgaaied A."/>
            <person name="Tetaud E."/>
            <person name="di Rago J.P."/>
            <person name="Devin A."/>
            <person name="Duvezin-Caubet S."/>
        </authorList>
    </citation>
    <scope>SUBCELLULAR LOCATION</scope>
    <scope>TOPOLOGY</scope>
    <scope>SUBUNIT</scope>
    <scope>INTERACTION WITH ATP5MC1</scope>
</reference>
<reference key="12">
    <citation type="journal article" date="2021" name="Proc. Natl. Acad. Sci. U.S.A.">
        <title>TMEM70 and TMEM242 help to assemble the rotor ring of human ATP synthase and interact with assembly factors for complex I.</title>
        <authorList>
            <person name="Carroll J."/>
            <person name="He J."/>
            <person name="Ding S."/>
            <person name="Fearnley I.M."/>
            <person name="Walker J.E."/>
        </authorList>
    </citation>
    <scope>INTERACTION WITH ATP5MC3; TMEM242; ACAD9; ECSIT; NDUFAF1; TMEM126B AND TIMMDC1</scope>
    <scope>FUNCTION</scope>
</reference>
<reference key="13">
    <citation type="journal article" date="2012" name="Neurogenetics">
        <title>TMEM70: a mutational hot spot in nuclear ATP synthase deficiency with a pivotal role in complex V biogenesis.</title>
        <authorList>
            <person name="Torraco A."/>
            <person name="Verrigni D."/>
            <person name="Rizza T."/>
            <person name="Meschini M.C."/>
            <person name="Vazquez-Memije M.E."/>
            <person name="Martinelli D."/>
            <person name="Bianchi M."/>
            <person name="Piemonte F."/>
            <person name="Dionisi-Vici C."/>
            <person name="Santorelli F.M."/>
            <person name="Bertini E."/>
            <person name="Carrozzo R."/>
        </authorList>
    </citation>
    <scope>VARIANT MC5DN2 PRO-210</scope>
</reference>
<name>TMM70_HUMAN</name>
<organism>
    <name type="scientific">Homo sapiens</name>
    <name type="common">Human</name>
    <dbReference type="NCBI Taxonomy" id="9606"/>
    <lineage>
        <taxon>Eukaryota</taxon>
        <taxon>Metazoa</taxon>
        <taxon>Chordata</taxon>
        <taxon>Craniata</taxon>
        <taxon>Vertebrata</taxon>
        <taxon>Euteleostomi</taxon>
        <taxon>Mammalia</taxon>
        <taxon>Eutheria</taxon>
        <taxon>Euarchontoglires</taxon>
        <taxon>Primates</taxon>
        <taxon>Haplorrhini</taxon>
        <taxon>Catarrhini</taxon>
        <taxon>Hominidae</taxon>
        <taxon>Homo</taxon>
    </lineage>
</organism>
<gene>
    <name evidence="15" type="primary">TMEM70</name>
</gene>
<comment type="function">
    <text evidence="3 4 7 8 9 10">Scaffold protein that participates in the c-ring assembly of mitochondrial ATP synthase (F(1)F(0) ATP synthase or complex V) by facilitating the membrane insertion and oligomer formation of the subunit c/ATP5MC1 through its interaction (PubMed:31652072, PubMed:32275929, PubMed:33359711, PubMed:33753518). Therefore, participates in the early stage of mitochondrial ATP synthase biogenesis and also protects subunit c/ATP5MC1 against intramitochondrial proteolysis (PubMed:18953340, PubMed:20937241, PubMed:31652072, PubMed:33359711). In addition, binds the mitochondrial proton-transporting ATP synthase complexes I and may play a role in the stability of its membrane-bound subassemblies (PubMed:32275929).</text>
</comment>
<comment type="subunit">
    <text evidence="6 7 9 10">Homooligomer (PubMed:24576557, PubMed:33359711). Interacts (homooligomer form) with ATP5MC1; this interaction facilitates the oligomer formation of subunit c/ATP5MC1 (c-ring) and the c-ring membrane insertion and also protects ATP5MC1 against intramitochondrial proteolysis (PubMed:31652072, PubMed:33359711). Interacts with the core subunits TMEM126B, NDUFAF1, ECSIT and ACAD9 of the MCIA complex (PubMed:33753518). Interacts with ATP5MC3, TMEM242 and TIMMDC1 (PubMed:33753518).</text>
</comment>
<comment type="interaction">
    <interactant intactId="EBI-726363">
        <id>Q9BUB7</id>
    </interactant>
    <interactant intactId="EBI-12033434">
        <id>Q9UBY5</id>
        <label>LPAR3</label>
    </interactant>
    <organismsDiffer>false</organismsDiffer>
    <experiments>3</experiments>
</comment>
<comment type="interaction">
    <interactant intactId="EBI-726363">
        <id>Q9BUB7</id>
    </interactant>
    <interactant intactId="EBI-752037">
        <id>P61019</id>
        <label>RAB2A</label>
    </interactant>
    <organismsDiffer>false</organismsDiffer>
    <experiments>3</experiments>
</comment>
<comment type="subcellular location">
    <subcellularLocation>
        <location evidence="4 6 9">Mitochondrion inner membrane</location>
        <topology evidence="4 6">Multi-pass membrane protein</topology>
    </subcellularLocation>
    <text evidence="9">Mostly located within the inner cristae membrane.</text>
</comment>
<comment type="alternative products">
    <event type="alternative splicing"/>
    <isoform>
        <id>Q9BUB7-1</id>
        <name>1</name>
        <sequence type="displayed"/>
    </isoform>
    <isoform>
        <id>Q9BUB7-2</id>
        <name>2</name>
        <sequence type="described" ref="VSP_020759"/>
    </isoform>
    <isoform>
        <id>Q9BUB7-3</id>
        <name>3</name>
        <sequence type="described" ref="VSP_054227 VSP_054228"/>
    </isoform>
</comment>
<comment type="tissue specificity">
    <text evidence="7">Lower expressed in the heart than in the liver (at protein level).</text>
</comment>
<comment type="disease" evidence="3 5">
    <disease id="DI-03147">
        <name>Mitochondrial complex V deficiency, nuclear type 2</name>
        <acronym>MC5DN2</acronym>
        <description>A mitochondrial disorder with heterogeneous clinical manifestations including dysmorphic features, psychomotor retardation, hypotonia, growth retardation, cardiomyopathy, enlarged liver, hypoplastic kidneys and elevated lactate levels in urine, plasma and cerebrospinal fluid.</description>
        <dbReference type="MIM" id="614052"/>
    </disease>
    <text>The disease is caused by variants affecting the gene represented in this entry.</text>
</comment>
<comment type="similarity">
    <text evidence="12">Belongs to the TMEM70 family.</text>
</comment>
<feature type="transit peptide" description="Mitochondrion" evidence="1">
    <location>
        <begin position="1"/>
        <end position="81"/>
    </location>
</feature>
<feature type="chain" id="PRO_0000251472" description="Transmembrane protein 70, mitochondrial">
    <location>
        <begin position="82"/>
        <end position="260"/>
    </location>
</feature>
<feature type="topological domain" description="Mitochondrial matrix" evidence="13">
    <location>
        <begin position="82"/>
        <end position="102"/>
    </location>
</feature>
<feature type="transmembrane region" description="Helical" evidence="1">
    <location>
        <begin position="103"/>
        <end position="123"/>
    </location>
</feature>
<feature type="topological domain" description="Mitochondrial intermembrane" evidence="14">
    <location>
        <begin position="124"/>
        <end position="141"/>
    </location>
</feature>
<feature type="transmembrane region" description="Helical" evidence="1">
    <location>
        <begin position="142"/>
        <end position="162"/>
    </location>
</feature>
<feature type="topological domain" description="Mitochondrial matrix" evidence="13">
    <location>
        <begin position="163"/>
        <end position="260"/>
    </location>
</feature>
<feature type="splice variant" id="VSP_020759" description="In isoform 2." evidence="11">
    <location>
        <begin position="1"/>
        <end position="99"/>
    </location>
</feature>
<feature type="splice variant" id="VSP_054227" description="In isoform 3." evidence="12">
    <original>V</original>
    <variation>K</variation>
    <location>
        <position position="107"/>
    </location>
</feature>
<feature type="splice variant" id="VSP_054228" description="In isoform 3." evidence="12">
    <location>
        <begin position="108"/>
        <end position="260"/>
    </location>
</feature>
<feature type="sequence variant" id="VAR_027686" description="In dbSNP:rs8075.">
    <original>A</original>
    <variation>P</variation>
    <location>
        <position position="34"/>
    </location>
</feature>
<feature type="sequence variant" id="VAR_068847" description="In MC5DN2." evidence="5">
    <original>T</original>
    <variation>P</variation>
    <location>
        <position position="210"/>
    </location>
</feature>
<feature type="sequence variant" id="VAR_034565" description="In dbSNP:rs35564486.">
    <original>N</original>
    <variation>K</variation>
    <location>
        <position position="228"/>
    </location>
</feature>
<feature type="sequence variant" id="VAR_027687" description="In dbSNP:rs1053079." evidence="2">
    <original>T</original>
    <variation>A</variation>
    <location>
        <position position="250"/>
    </location>
</feature>
<feature type="sequence variant" id="VAR_027688" description="In dbSNP:rs1053077." evidence="2">
    <original>D</original>
    <variation>E</variation>
    <location>
        <position position="259"/>
    </location>
</feature>
<protein>
    <recommendedName>
        <fullName evidence="12">Transmembrane protein 70, mitochondrial</fullName>
    </recommendedName>
</protein>
<evidence type="ECO:0000255" key="1"/>
<evidence type="ECO:0000269" key="2">
    <source>
    </source>
</evidence>
<evidence type="ECO:0000269" key="3">
    <source>
    </source>
</evidence>
<evidence type="ECO:0000269" key="4">
    <source>
    </source>
</evidence>
<evidence type="ECO:0000269" key="5">
    <source>
    </source>
</evidence>
<evidence type="ECO:0000269" key="6">
    <source>
    </source>
</evidence>
<evidence type="ECO:0000269" key="7">
    <source>
    </source>
</evidence>
<evidence type="ECO:0000269" key="8">
    <source>
    </source>
</evidence>
<evidence type="ECO:0000269" key="9">
    <source>
    </source>
</evidence>
<evidence type="ECO:0000269" key="10">
    <source>
    </source>
</evidence>
<evidence type="ECO:0000303" key="11">
    <source>
    </source>
</evidence>
<evidence type="ECO:0000305" key="12"/>
<evidence type="ECO:0000305" key="13">
    <source>
    </source>
</evidence>
<evidence type="ECO:0000305" key="14">
    <source>
    </source>
</evidence>
<evidence type="ECO:0000312" key="15">
    <source>
        <dbReference type="HGNC" id="HGNC:26050"/>
    </source>
</evidence>
<sequence length="260" mass="28969">MLFLALGSPWAVELPLCGRRTALCAAAALRGPRASVSRASSSSGPSGPVAGWSTGPSGAARLLRRPGRAQIPVYWEGYVRFLNTPSDKSEDGRLIYTGNMARAVFGVKCFSYSTSLIGLTFLPYIFTQNNAISESVPLPIQIIFYGIMGSFTVITPVLLHFITKGYVIRLYHEATTDTYKAITYNAMLAETSTVFHQNDVKIPDAKHVFTTFYAKTKSLLVNPVLFPNREDYIHLMGYDKEEFILYMEETSEEKRHKDDK</sequence>
<accession>Q9BUB7</accession>
<accession>E9PDY9</accession>
<accession>Q9NWY5</accession>
<proteinExistence type="evidence at protein level"/>